<feature type="signal peptide" evidence="2">
    <location>
        <begin position="1"/>
        <end position="24"/>
    </location>
</feature>
<feature type="chain" id="PRO_5001520201" description="Evasin P985" evidence="2">
    <location>
        <begin position="25"/>
        <end position="132"/>
    </location>
</feature>
<feature type="glycosylation site" description="N-linked (GlcNAc...) asparagine" evidence="3">
    <location>
        <position position="45"/>
    </location>
</feature>
<feature type="glycosylation site" description="N-linked (GlcNAc...) asparagine" evidence="3">
    <location>
        <position position="69"/>
    </location>
</feature>
<feature type="glycosylation site" description="N-linked (GlcNAc...) asparagine" evidence="3">
    <location>
        <position position="74"/>
    </location>
</feature>
<feature type="glycosylation site" description="N-linked (GlcNAc...) asparagine" evidence="3">
    <location>
        <position position="103"/>
    </location>
</feature>
<feature type="glycosylation site" description="N-linked (GlcNAc...) asparagine" evidence="3">
    <location>
        <position position="111"/>
    </location>
</feature>
<feature type="glycosylation site" description="N-linked (GlcNAc...) asparagine" evidence="3">
    <location>
        <position position="117"/>
    </location>
</feature>
<feature type="disulfide bond" evidence="1">
    <location>
        <begin position="48"/>
        <end position="70"/>
    </location>
</feature>
<feature type="disulfide bond" evidence="1">
    <location>
        <begin position="66"/>
        <end position="109"/>
    </location>
</feature>
<feature type="disulfide bond" evidence="1">
    <location>
        <begin position="83"/>
        <end position="114"/>
    </location>
</feature>
<feature type="disulfide bond" evidence="1">
    <location>
        <begin position="104"/>
        <end position="123"/>
    </location>
</feature>
<comment type="function">
    <text evidence="4">Salivary chemokine-binding protein which binds to host chemokine CCL5.</text>
</comment>
<comment type="subcellular location">
    <subcellularLocation>
        <location evidence="6">Secreted</location>
    </subcellularLocation>
</comment>
<organism>
    <name type="scientific">Amblyomma parvum</name>
    <name type="common">South American tick</name>
    <dbReference type="NCBI Taxonomy" id="251391"/>
    <lineage>
        <taxon>Eukaryota</taxon>
        <taxon>Metazoa</taxon>
        <taxon>Ecdysozoa</taxon>
        <taxon>Arthropoda</taxon>
        <taxon>Chelicerata</taxon>
        <taxon>Arachnida</taxon>
        <taxon>Acari</taxon>
        <taxon>Parasitiformes</taxon>
        <taxon>Ixodida</taxon>
        <taxon>Ixodoidea</taxon>
        <taxon>Ixodidae</taxon>
        <taxon>Amblyomminae</taxon>
        <taxon>Amblyomma</taxon>
    </lineage>
</organism>
<accession>A0A023FT45</accession>
<protein>
    <recommendedName>
        <fullName evidence="5">Evasin P985</fullName>
    </recommendedName>
</protein>
<sequence>MHSTIAYVSLLPLALFVAMHGASTDEESEELGASTDVDYEELDANCTCPAPALTSTRNNKHYPLGCIYNCSSYNCTIPDGTPCYVLTLGEVKEHLQIGSTVPNCTCGLCRNGTCVSNGTVEECFAVEEIEET</sequence>
<name>EV985_AMBPA</name>
<evidence type="ECO:0000250" key="1">
    <source>
        <dbReference type="UniProtKB" id="P0C8E7"/>
    </source>
</evidence>
<evidence type="ECO:0000255" key="2"/>
<evidence type="ECO:0000255" key="3">
    <source>
        <dbReference type="PROSITE-ProRule" id="PRU00498"/>
    </source>
</evidence>
<evidence type="ECO:0000269" key="4">
    <source>
    </source>
</evidence>
<evidence type="ECO:0000303" key="5">
    <source>
    </source>
</evidence>
<evidence type="ECO:0000305" key="6"/>
<evidence type="ECO:0000312" key="7">
    <source>
        <dbReference type="EMBL" id="JAC24842.1"/>
    </source>
</evidence>
<proteinExistence type="evidence at transcript level"/>
<keyword id="KW-1015">Disulfide bond</keyword>
<keyword id="KW-0325">Glycoprotein</keyword>
<keyword id="KW-0964">Secreted</keyword>
<keyword id="KW-0732">Signal</keyword>
<reference evidence="7" key="1">
    <citation type="journal article" date="2014" name="Parasit. Vectors">
        <title>The sialotranscriptome of Amblyomma triste, Amblyomma parvum and Amblyomma cajennense ticks, uncovered by 454-based RNA-seq.</title>
        <authorList>
            <person name="Garcia G.R."/>
            <person name="Gardinassi L.G."/>
            <person name="Ribeiro J.M."/>
            <person name="Anatriello E."/>
            <person name="Ferreira B.R."/>
            <person name="Moreira H.N."/>
            <person name="Mafra C."/>
            <person name="Martins M.M."/>
            <person name="Szabo M.P."/>
            <person name="de Miranda-Santos I.K."/>
            <person name="Maruyama S.R."/>
        </authorList>
    </citation>
    <scope>NUCLEOTIDE SEQUENCE [LARGE SCALE MRNA]</scope>
    <source>
        <strain evidence="7">Araguapaz</strain>
        <tissue evidence="7">Salivary gland</tissue>
    </source>
</reference>
<reference evidence="6" key="2">
    <citation type="journal article" date="2017" name="Sci. Rep.">
        <title>Yeast surface display identifies a family of evasins from ticks with novel polyvalent CC chemokine-binding activities.</title>
        <authorList>
            <person name="Singh K."/>
            <person name="Davies G."/>
            <person name="Alenazi Y."/>
            <person name="Eaton J.R.O."/>
            <person name="Kawamura A."/>
            <person name="Bhattacharya S."/>
        </authorList>
    </citation>
    <scope>FUNCTION</scope>
</reference>
<dbReference type="EMBL" id="GBBL01002478">
    <property type="protein sequence ID" value="JAC24842.1"/>
    <property type="molecule type" value="mRNA"/>
</dbReference>
<dbReference type="SMR" id="A0A023FT45"/>
<dbReference type="GO" id="GO:0005576">
    <property type="term" value="C:extracellular region"/>
    <property type="evidence" value="ECO:0007669"/>
    <property type="project" value="UniProtKB-SubCell"/>
</dbReference>
<dbReference type="GO" id="GO:0019957">
    <property type="term" value="F:C-C chemokine binding"/>
    <property type="evidence" value="ECO:0000314"/>
    <property type="project" value="UniProtKB"/>
</dbReference>
<dbReference type="Gene3D" id="2.30.130.100">
    <property type="match status" value="1"/>
</dbReference>
<dbReference type="InterPro" id="IPR045797">
    <property type="entry name" value="EVA_Class_A"/>
</dbReference>
<dbReference type="Pfam" id="PF19429">
    <property type="entry name" value="EVA_Class_A"/>
    <property type="match status" value="1"/>
</dbReference>